<reference key="1">
    <citation type="journal article" date="2002" name="Arch. Microbiol.">
        <title>Validation of Cdc68p as a novel antifungal target.</title>
        <authorList>
            <person name="Buurman E.T."/>
            <person name="Jiang W."/>
            <person name="McCoy M."/>
            <person name="Averett D.R."/>
            <person name="Thompson C.M."/>
            <person name="Wobbe C.R."/>
        </authorList>
    </citation>
    <scope>NUCLEOTIDE SEQUENCE [GENOMIC DNA]</scope>
    <source>
        <strain>1006</strain>
    </source>
</reference>
<reference key="2">
    <citation type="journal article" date="2004" name="Proc. Natl. Acad. Sci. U.S.A.">
        <title>The diploid genome sequence of Candida albicans.</title>
        <authorList>
            <person name="Jones T."/>
            <person name="Federspiel N.A."/>
            <person name="Chibana H."/>
            <person name="Dungan J."/>
            <person name="Kalman S."/>
            <person name="Magee B.B."/>
            <person name="Newport G."/>
            <person name="Thorstenson Y.R."/>
            <person name="Agabian N."/>
            <person name="Magee P.T."/>
            <person name="Davis R.W."/>
            <person name="Scherer S."/>
        </authorList>
    </citation>
    <scope>NUCLEOTIDE SEQUENCE [LARGE SCALE GENOMIC DNA]</scope>
    <source>
        <strain>SC5314 / ATCC MYA-2876</strain>
    </source>
</reference>
<reference key="3">
    <citation type="journal article" date="2007" name="Genome Biol.">
        <title>Assembly of the Candida albicans genome into sixteen supercontigs aligned on the eight chromosomes.</title>
        <authorList>
            <person name="van het Hoog M."/>
            <person name="Rast T.J."/>
            <person name="Martchenko M."/>
            <person name="Grindle S."/>
            <person name="Dignard D."/>
            <person name="Hogues H."/>
            <person name="Cuomo C."/>
            <person name="Berriman M."/>
            <person name="Scherer S."/>
            <person name="Magee B.B."/>
            <person name="Whiteway M."/>
            <person name="Chibana H."/>
            <person name="Nantel A."/>
            <person name="Magee P.T."/>
        </authorList>
    </citation>
    <scope>GENOME REANNOTATION</scope>
    <source>
        <strain>SC5314 / ATCC MYA-2876</strain>
    </source>
</reference>
<reference key="4">
    <citation type="journal article" date="2013" name="Genome Biol.">
        <title>Assembly of a phased diploid Candida albicans genome facilitates allele-specific measurements and provides a simple model for repeat and indel structure.</title>
        <authorList>
            <person name="Muzzey D."/>
            <person name="Schwartz K."/>
            <person name="Weissman J.S."/>
            <person name="Sherlock G."/>
        </authorList>
    </citation>
    <scope>NUCLEOTIDE SEQUENCE [LARGE SCALE GENOMIC DNA]</scope>
    <scope>GENOME REANNOTATION</scope>
    <source>
        <strain>SC5314 / ATCC MYA-2876</strain>
    </source>
</reference>
<feature type="chain" id="PRO_0000245181" description="FACT complex subunit SPT16">
    <location>
        <begin position="1"/>
        <end position="1060"/>
    </location>
</feature>
<feature type="region of interest" description="Disordered" evidence="3">
    <location>
        <begin position="458"/>
        <end position="490"/>
    </location>
</feature>
<feature type="region of interest" description="Disordered" evidence="3">
    <location>
        <begin position="977"/>
        <end position="1060"/>
    </location>
</feature>
<feature type="coiled-coil region" evidence="2">
    <location>
        <begin position="508"/>
        <end position="532"/>
    </location>
</feature>
<feature type="compositionally biased region" description="Polar residues" evidence="3">
    <location>
        <begin position="478"/>
        <end position="490"/>
    </location>
</feature>
<feature type="compositionally biased region" description="Acidic residues" evidence="3">
    <location>
        <begin position="979"/>
        <end position="990"/>
    </location>
</feature>
<feature type="compositionally biased region" description="Acidic residues" evidence="3">
    <location>
        <begin position="997"/>
        <end position="1044"/>
    </location>
</feature>
<feature type="compositionally biased region" description="Basic and acidic residues" evidence="3">
    <location>
        <begin position="1045"/>
        <end position="1060"/>
    </location>
</feature>
<feature type="sequence conflict" description="In Ref. 1; AAG48574." evidence="4" ref="1">
    <location>
        <begin position="146"/>
        <end position="149"/>
    </location>
</feature>
<feature type="sequence conflict" description="In Ref. 1; AAG48574." evidence="4" ref="1">
    <original>N</original>
    <variation>S</variation>
    <location>
        <position position="338"/>
    </location>
</feature>
<feature type="sequence conflict" description="In Ref. 1; AAG48574." evidence="4" ref="1">
    <location>
        <begin position="412"/>
        <end position="414"/>
    </location>
</feature>
<feature type="sequence conflict" description="In Ref. 1; AAG48574." evidence="4" ref="1">
    <original>A</original>
    <variation>G</variation>
    <location>
        <position position="486"/>
    </location>
</feature>
<feature type="sequence conflict" description="In Ref. 1; AAG48574." evidence="4" ref="1">
    <original>S</original>
    <variation>SQS</variation>
    <location>
        <position position="734"/>
    </location>
</feature>
<feature type="sequence conflict" description="In Ref. 1; AAG48574." evidence="4" ref="1">
    <location>
        <begin position="1030"/>
        <end position="1032"/>
    </location>
</feature>
<accession>Q5A1D5</accession>
<accession>A0A1D8PML2</accession>
<accession>Q9HF08</accession>
<evidence type="ECO:0000250" key="1"/>
<evidence type="ECO:0000255" key="2"/>
<evidence type="ECO:0000256" key="3">
    <source>
        <dbReference type="SAM" id="MobiDB-lite"/>
    </source>
</evidence>
<evidence type="ECO:0000305" key="4"/>
<sequence length="1060" mass="121334">MSEVNIDAGLFYKRLSIFQKQLTANNIPQALIIVGARSDDNTYKKSTVLQNWLLGYEFIHTAIYITDKKCIFITSEGKSKHLKHLTNQKPDLVELWIRTKDVEHNKQLFIKLLETMTKLDSKYGKILKDKYDGKFIDEWNQILNDDNNNNNNNTTNDHALSAVDLAVTVSQALAVKDSEEFNNTKIASNASVVMMDTFVNDMMIIVDDEKKITNSQLTDQIEDKIENNKWYLKTKLGKNLLQSIKDFDPEYLEYCYSPIIQSGGDYDLKPSAVSTDKPLIGEGVILSSIGLRYKSYCSNIARTFLIDPTSEMETNYDFLLQLQKYIVDNLLKDGVPANKVYQDTIDYIKKERPDLVNHFTKNCGWLLGMEFRDSTFILNAKTTDRKLTTGQIISLTIGFNNLSNDKNDKNDKNDNKTNHQKNKQTYALLLTDTIKITDDSSILLTNYSKDRAAISFSFNDDNETQKENNNNNNKRPGLSQTSNTTALKLESTENTAILKSKLRHENTNADDANSEKLRQEIQIKLHEKRLQEGLARFSKADATDADDFKPIFKKYESYVRESQIPNSVNDLKIHIDYKNQTIILPISGRPVPFHINSYKSGSQNEEGDFTYLRLNFNSPGAGGNVTKKQELPYEDSPDNSFLRSITIRSRDRQRMVDVYKAIQDLKKDSVKREQEKKQMADVITQANLIELKGSRVKKLNNVFIRPTPDTKKIGGVLQIHENGLRYQSQPQSQSNFKNDQRVDVLFSNIKHLFFQPCKDELIVLIHCHLKNPIMIGKRKTFDVQFYREASDMAFDETGGRKRKYRYGDEDELQQEQEERRRKALLDKEFKGFAELIADSSHGMVDLDIPFRELGFQGVPFRSSVLCVPTRDCLVQLIDPPYLVVTLEEIEIAHLERVQFGLKNFDLVFVFKDFNKPVVHINTIPVELLEDVKSWLTDVDIPISEGQMNLNWVQIMKTVLADPYQFFIDGGWAFLTGQGESDEEEESDEESDFRVSDEDPQDEDEESDDYASEEESDDYSGSDDDGSGGGGDDDDDDSESGEDWDALERKAAKADRNSGFD</sequence>
<organism>
    <name type="scientific">Candida albicans (strain SC5314 / ATCC MYA-2876)</name>
    <name type="common">Yeast</name>
    <dbReference type="NCBI Taxonomy" id="237561"/>
    <lineage>
        <taxon>Eukaryota</taxon>
        <taxon>Fungi</taxon>
        <taxon>Dikarya</taxon>
        <taxon>Ascomycota</taxon>
        <taxon>Saccharomycotina</taxon>
        <taxon>Pichiomycetes</taxon>
        <taxon>Debaryomycetaceae</taxon>
        <taxon>Candida/Lodderomyces clade</taxon>
        <taxon>Candida</taxon>
    </lineage>
</organism>
<comment type="function">
    <text evidence="1">Component of the FACT complex, a general chromatin factor that acts to reorganize nucleosomes. The FACT complex is involved in multiple processes that require DNA as a template such as mRNA elongation, DNA replication and DNA repair. During transcription elongation the FACT complex acts as a histone chaperone that both destabilizes and restores nucleosomal structure. It facilitates the passage of RNA polymerase II and transcription by promoting the dissociation of one histone H2A-H2B dimer from the nucleosome, then subsequently promotes the reestablishment of the nucleosome following the passage of RNA polymerase II (By similarity).</text>
</comment>
<comment type="subunit">
    <text evidence="1">Forms a stable heterodimer with POB3. The SPT16-POB3 dimer weakly associates with multiple molecules of NHP6 to form the FACT complex (By similarity).</text>
</comment>
<comment type="subcellular location">
    <subcellularLocation>
        <location evidence="1">Nucleus</location>
    </subcellularLocation>
    <subcellularLocation>
        <location evidence="1">Chromosome</location>
    </subcellularLocation>
</comment>
<comment type="similarity">
    <text evidence="4">Belongs to the peptidase M24 family. SPT16 subfamily.</text>
</comment>
<comment type="caution">
    <text evidence="4">Although related to the peptidase M24 family, this protein lacks conserved active site residues suggesting that it may lack peptidase activity.</text>
</comment>
<keyword id="KW-0158">Chromosome</keyword>
<keyword id="KW-0175">Coiled coil</keyword>
<keyword id="KW-0227">DNA damage</keyword>
<keyword id="KW-0234">DNA repair</keyword>
<keyword id="KW-0235">DNA replication</keyword>
<keyword id="KW-0539">Nucleus</keyword>
<keyword id="KW-1185">Reference proteome</keyword>
<keyword id="KW-0804">Transcription</keyword>
<keyword id="KW-0805">Transcription regulation</keyword>
<proteinExistence type="inferred from homology"/>
<name>SPT16_CANAL</name>
<dbReference type="EMBL" id="AF253047">
    <property type="protein sequence ID" value="AAG48574.1"/>
    <property type="molecule type" value="Genomic_DNA"/>
</dbReference>
<dbReference type="EMBL" id="CP017626">
    <property type="protein sequence ID" value="AOW29374.1"/>
    <property type="molecule type" value="Genomic_DNA"/>
</dbReference>
<dbReference type="RefSeq" id="XP_715540.2">
    <property type="nucleotide sequence ID" value="XM_710447.2"/>
</dbReference>
<dbReference type="SMR" id="Q5A1D5"/>
<dbReference type="FunCoup" id="Q5A1D5">
    <property type="interactions" value="1440"/>
</dbReference>
<dbReference type="STRING" id="237561.Q5A1D5"/>
<dbReference type="EnsemblFungi" id="C4_06500W_A-T">
    <property type="protein sequence ID" value="C4_06500W_A-T-p1"/>
    <property type="gene ID" value="C4_06500W_A"/>
</dbReference>
<dbReference type="GeneID" id="3642787"/>
<dbReference type="KEGG" id="cal:CAALFM_C406500WA"/>
<dbReference type="CGD" id="CAL0000198046">
    <property type="gene designation" value="CDC68"/>
</dbReference>
<dbReference type="VEuPathDB" id="FungiDB:C4_06500W_A"/>
<dbReference type="eggNOG" id="KOG1189">
    <property type="taxonomic scope" value="Eukaryota"/>
</dbReference>
<dbReference type="HOGENOM" id="CLU_004627_1_0_1"/>
<dbReference type="InParanoid" id="Q5A1D5"/>
<dbReference type="OrthoDB" id="10251642at2759"/>
<dbReference type="PRO" id="PR:Q5A1D5"/>
<dbReference type="Proteomes" id="UP000000559">
    <property type="component" value="Chromosome 4"/>
</dbReference>
<dbReference type="GO" id="GO:0035101">
    <property type="term" value="C:FACT complex"/>
    <property type="evidence" value="ECO:0000318"/>
    <property type="project" value="GO_Central"/>
</dbReference>
<dbReference type="GO" id="GO:0008023">
    <property type="term" value="C:transcription elongation factor complex"/>
    <property type="evidence" value="ECO:0000316"/>
    <property type="project" value="CGD"/>
</dbReference>
<dbReference type="GO" id="GO:0042393">
    <property type="term" value="F:histone binding"/>
    <property type="evidence" value="ECO:0007669"/>
    <property type="project" value="EnsemblFungi"/>
</dbReference>
<dbReference type="GO" id="GO:0140713">
    <property type="term" value="F:histone chaperone activity"/>
    <property type="evidence" value="ECO:0007669"/>
    <property type="project" value="EnsemblFungi"/>
</dbReference>
<dbReference type="GO" id="GO:0031491">
    <property type="term" value="F:nucleosome binding"/>
    <property type="evidence" value="ECO:0000318"/>
    <property type="project" value="GO_Central"/>
</dbReference>
<dbReference type="GO" id="GO:0140719">
    <property type="term" value="P:constitutive heterochromatin formation"/>
    <property type="evidence" value="ECO:0007669"/>
    <property type="project" value="EnsemblFungi"/>
</dbReference>
<dbReference type="GO" id="GO:0006281">
    <property type="term" value="P:DNA repair"/>
    <property type="evidence" value="ECO:0007669"/>
    <property type="project" value="UniProtKB-KW"/>
</dbReference>
<dbReference type="GO" id="GO:0006261">
    <property type="term" value="P:DNA-templated DNA replication"/>
    <property type="evidence" value="ECO:0007669"/>
    <property type="project" value="EnsemblFungi"/>
</dbReference>
<dbReference type="GO" id="GO:0006334">
    <property type="term" value="P:nucleosome assembly"/>
    <property type="evidence" value="ECO:0007669"/>
    <property type="project" value="EnsemblFungi"/>
</dbReference>
<dbReference type="GO" id="GO:0045899">
    <property type="term" value="P:positive regulation of RNA polymerase II transcription preinitiation complex assembly"/>
    <property type="evidence" value="ECO:0007669"/>
    <property type="project" value="EnsemblFungi"/>
</dbReference>
<dbReference type="GO" id="GO:0032784">
    <property type="term" value="P:regulation of DNA-templated transcription elongation"/>
    <property type="evidence" value="ECO:0000316"/>
    <property type="project" value="CGD"/>
</dbReference>
<dbReference type="GO" id="GO:0007063">
    <property type="term" value="P:regulation of sister chromatid cohesion"/>
    <property type="evidence" value="ECO:0007669"/>
    <property type="project" value="EnsemblFungi"/>
</dbReference>
<dbReference type="GO" id="GO:0006368">
    <property type="term" value="P:transcription elongation by RNA polymerase II"/>
    <property type="evidence" value="ECO:0000316"/>
    <property type="project" value="CGD"/>
</dbReference>
<dbReference type="CDD" id="cd01091">
    <property type="entry name" value="CDC68-like"/>
    <property type="match status" value="1"/>
</dbReference>
<dbReference type="FunFam" id="2.30.29.150:FF:000002">
    <property type="entry name" value="FACT complex subunit SPT16"/>
    <property type="match status" value="1"/>
</dbReference>
<dbReference type="FunFam" id="2.30.29.30:FF:000017">
    <property type="entry name" value="FACT complex subunit SPT16"/>
    <property type="match status" value="1"/>
</dbReference>
<dbReference type="FunFam" id="2.30.29.210:FF:000001">
    <property type="entry name" value="FACT complex subunit spt16"/>
    <property type="match status" value="1"/>
</dbReference>
<dbReference type="FunFam" id="3.90.230.10:FF:000005">
    <property type="entry name" value="FACT complex subunit spt16"/>
    <property type="match status" value="1"/>
</dbReference>
<dbReference type="Gene3D" id="2.30.29.150">
    <property type="match status" value="1"/>
</dbReference>
<dbReference type="Gene3D" id="3.90.230.10">
    <property type="entry name" value="Creatinase/methionine aminopeptidase superfamily"/>
    <property type="match status" value="1"/>
</dbReference>
<dbReference type="Gene3D" id="3.40.350.10">
    <property type="entry name" value="Creatinase/prolidase N-terminal domain"/>
    <property type="match status" value="1"/>
</dbReference>
<dbReference type="Gene3D" id="2.30.29.210">
    <property type="entry name" value="FACT complex subunit Spt16p/Cdc68p"/>
    <property type="match status" value="1"/>
</dbReference>
<dbReference type="Gene3D" id="2.30.29.30">
    <property type="entry name" value="Pleckstrin-homology domain (PH domain)/Phosphotyrosine-binding domain (PTB)"/>
    <property type="match status" value="1"/>
</dbReference>
<dbReference type="InterPro" id="IPR029149">
    <property type="entry name" value="Creatin/AminoP/Spt16_N"/>
</dbReference>
<dbReference type="InterPro" id="IPR036005">
    <property type="entry name" value="Creatinase/aminopeptidase-like"/>
</dbReference>
<dbReference type="InterPro" id="IPR029148">
    <property type="entry name" value="FACT-SPT16_Nlobe"/>
</dbReference>
<dbReference type="InterPro" id="IPR056595">
    <property type="entry name" value="Fact-SPT16_PH"/>
</dbReference>
<dbReference type="InterPro" id="IPR013953">
    <property type="entry name" value="FACT_SPT16_M"/>
</dbReference>
<dbReference type="InterPro" id="IPR000994">
    <property type="entry name" value="Pept_M24"/>
</dbReference>
<dbReference type="InterPro" id="IPR011993">
    <property type="entry name" value="PH-like_dom_sf"/>
</dbReference>
<dbReference type="InterPro" id="IPR013719">
    <property type="entry name" value="RTT106/SPT16-like_middle_dom"/>
</dbReference>
<dbReference type="InterPro" id="IPR040258">
    <property type="entry name" value="Spt16"/>
</dbReference>
<dbReference type="InterPro" id="IPR033825">
    <property type="entry name" value="Spt16_M24"/>
</dbReference>
<dbReference type="PANTHER" id="PTHR13980">
    <property type="entry name" value="CDC68 RELATED"/>
    <property type="match status" value="1"/>
</dbReference>
<dbReference type="PANTHER" id="PTHR13980:SF15">
    <property type="entry name" value="FACT COMPLEX SUBUNIT SPT16"/>
    <property type="match status" value="1"/>
</dbReference>
<dbReference type="Pfam" id="PF14826">
    <property type="entry name" value="FACT-Spt16_Nlob"/>
    <property type="match status" value="1"/>
</dbReference>
<dbReference type="Pfam" id="PF00557">
    <property type="entry name" value="Peptidase_M24"/>
    <property type="match status" value="1"/>
</dbReference>
<dbReference type="Pfam" id="PF24824">
    <property type="entry name" value="PH_SPT16"/>
    <property type="match status" value="1"/>
</dbReference>
<dbReference type="Pfam" id="PF08512">
    <property type="entry name" value="Rttp106-like_middle"/>
    <property type="match status" value="1"/>
</dbReference>
<dbReference type="Pfam" id="PF08644">
    <property type="entry name" value="SPT16"/>
    <property type="match status" value="1"/>
</dbReference>
<dbReference type="SMART" id="SM01285">
    <property type="entry name" value="FACT-Spt16_Nlob"/>
    <property type="match status" value="1"/>
</dbReference>
<dbReference type="SMART" id="SM01287">
    <property type="entry name" value="Rtt106"/>
    <property type="match status" value="1"/>
</dbReference>
<dbReference type="SMART" id="SM01286">
    <property type="entry name" value="SPT16"/>
    <property type="match status" value="1"/>
</dbReference>
<dbReference type="SUPFAM" id="SSF55920">
    <property type="entry name" value="Creatinase/aminopeptidase"/>
    <property type="match status" value="1"/>
</dbReference>
<gene>
    <name type="primary">CDC68</name>
    <name type="synonym">SPT16</name>
    <name type="ordered locus">CAALFM_C406500WA</name>
    <name type="ORF">CaO19.10402</name>
    <name type="ORF">CaO19.2884</name>
</gene>
<protein>
    <recommendedName>
        <fullName>FACT complex subunit SPT16</fullName>
    </recommendedName>
    <alternativeName>
        <fullName>CaCDC68</fullName>
    </alternativeName>
    <alternativeName>
        <fullName>Cell division control protein 68</fullName>
    </alternativeName>
    <alternativeName>
        <fullName>Facilitates chromatin transcription complex subunit SPT16</fullName>
    </alternativeName>
</protein>